<protein>
    <recommendedName>
        <fullName evidence="1">DNA-directed RNA polymerase subunit gamma</fullName>
        <shortName evidence="1">RNAP subunit gamma</shortName>
        <ecNumber evidence="1">2.7.7.6</ecNumber>
    </recommendedName>
    <alternativeName>
        <fullName evidence="1">RNA polymerase subunit gamma</fullName>
    </alternativeName>
    <alternativeName>
        <fullName evidence="1">Transcriptase subunit gamma</fullName>
    </alternativeName>
</protein>
<dbReference type="EC" id="2.7.7.6" evidence="1"/>
<dbReference type="EMBL" id="CP001344">
    <property type="protein sequence ID" value="ACL42879.1"/>
    <property type="molecule type" value="Genomic_DNA"/>
</dbReference>
<dbReference type="SMR" id="B8HTV9"/>
<dbReference type="STRING" id="395961.Cyan7425_0487"/>
<dbReference type="KEGG" id="cyn:Cyan7425_0487"/>
<dbReference type="eggNOG" id="COG0086">
    <property type="taxonomic scope" value="Bacteria"/>
</dbReference>
<dbReference type="HOGENOM" id="CLU_030022_2_0_3"/>
<dbReference type="OrthoDB" id="9815296at2"/>
<dbReference type="GO" id="GO:0000428">
    <property type="term" value="C:DNA-directed RNA polymerase complex"/>
    <property type="evidence" value="ECO:0007669"/>
    <property type="project" value="UniProtKB-KW"/>
</dbReference>
<dbReference type="GO" id="GO:0003677">
    <property type="term" value="F:DNA binding"/>
    <property type="evidence" value="ECO:0007669"/>
    <property type="project" value="UniProtKB-UniRule"/>
</dbReference>
<dbReference type="GO" id="GO:0003899">
    <property type="term" value="F:DNA-directed RNA polymerase activity"/>
    <property type="evidence" value="ECO:0007669"/>
    <property type="project" value="UniProtKB-UniRule"/>
</dbReference>
<dbReference type="GO" id="GO:0000287">
    <property type="term" value="F:magnesium ion binding"/>
    <property type="evidence" value="ECO:0007669"/>
    <property type="project" value="UniProtKB-UniRule"/>
</dbReference>
<dbReference type="GO" id="GO:0008270">
    <property type="term" value="F:zinc ion binding"/>
    <property type="evidence" value="ECO:0007669"/>
    <property type="project" value="UniProtKB-UniRule"/>
</dbReference>
<dbReference type="GO" id="GO:0006351">
    <property type="term" value="P:DNA-templated transcription"/>
    <property type="evidence" value="ECO:0007669"/>
    <property type="project" value="UniProtKB-UniRule"/>
</dbReference>
<dbReference type="CDD" id="cd01609">
    <property type="entry name" value="RNAP_beta'_N"/>
    <property type="match status" value="1"/>
</dbReference>
<dbReference type="Gene3D" id="1.10.40.90">
    <property type="match status" value="1"/>
</dbReference>
<dbReference type="Gene3D" id="2.40.40.20">
    <property type="match status" value="1"/>
</dbReference>
<dbReference type="Gene3D" id="4.10.860.120">
    <property type="entry name" value="RNA polymerase II, clamp domain"/>
    <property type="match status" value="1"/>
</dbReference>
<dbReference type="Gene3D" id="1.10.274.100">
    <property type="entry name" value="RNA polymerase Rpb1, domain 3"/>
    <property type="match status" value="1"/>
</dbReference>
<dbReference type="HAMAP" id="MF_01323">
    <property type="entry name" value="RNApol_bact_RpoC1"/>
    <property type="match status" value="1"/>
</dbReference>
<dbReference type="InterPro" id="IPR012755">
    <property type="entry name" value="DNA-dir_RpoC1_gamma"/>
</dbReference>
<dbReference type="InterPro" id="IPR045867">
    <property type="entry name" value="DNA-dir_RpoC_beta_prime"/>
</dbReference>
<dbReference type="InterPro" id="IPR000722">
    <property type="entry name" value="RNA_pol_asu"/>
</dbReference>
<dbReference type="InterPro" id="IPR006592">
    <property type="entry name" value="RNA_pol_N"/>
</dbReference>
<dbReference type="InterPro" id="IPR007080">
    <property type="entry name" value="RNA_pol_Rpb1_1"/>
</dbReference>
<dbReference type="InterPro" id="IPR007066">
    <property type="entry name" value="RNA_pol_Rpb1_3"/>
</dbReference>
<dbReference type="InterPro" id="IPR042102">
    <property type="entry name" value="RNA_pol_Rpb1_3_sf"/>
</dbReference>
<dbReference type="InterPro" id="IPR044893">
    <property type="entry name" value="RNA_pol_Rpb1_clamp_domain"/>
</dbReference>
<dbReference type="InterPro" id="IPR034678">
    <property type="entry name" value="RNApol_RpoC1"/>
</dbReference>
<dbReference type="NCBIfam" id="NF002729">
    <property type="entry name" value="PRK02625.1"/>
    <property type="match status" value="1"/>
</dbReference>
<dbReference type="NCBIfam" id="TIGR02387">
    <property type="entry name" value="rpoC1_cyan"/>
    <property type="match status" value="1"/>
</dbReference>
<dbReference type="PANTHER" id="PTHR19376">
    <property type="entry name" value="DNA-DIRECTED RNA POLYMERASE"/>
    <property type="match status" value="1"/>
</dbReference>
<dbReference type="PANTHER" id="PTHR19376:SF54">
    <property type="entry name" value="DNA-DIRECTED RNA POLYMERASE SUBUNIT BETA"/>
    <property type="match status" value="1"/>
</dbReference>
<dbReference type="Pfam" id="PF04997">
    <property type="entry name" value="RNA_pol_Rpb1_1"/>
    <property type="match status" value="1"/>
</dbReference>
<dbReference type="Pfam" id="PF00623">
    <property type="entry name" value="RNA_pol_Rpb1_2"/>
    <property type="match status" value="2"/>
</dbReference>
<dbReference type="Pfam" id="PF04983">
    <property type="entry name" value="RNA_pol_Rpb1_3"/>
    <property type="match status" value="1"/>
</dbReference>
<dbReference type="SMART" id="SM00663">
    <property type="entry name" value="RPOLA_N"/>
    <property type="match status" value="1"/>
</dbReference>
<dbReference type="SUPFAM" id="SSF64484">
    <property type="entry name" value="beta and beta-prime subunits of DNA dependent RNA-polymerase"/>
    <property type="match status" value="1"/>
</dbReference>
<accession>B8HTV9</accession>
<proteinExistence type="inferred from homology"/>
<organism>
    <name type="scientific">Cyanothece sp. (strain PCC 7425 / ATCC 29141)</name>
    <dbReference type="NCBI Taxonomy" id="395961"/>
    <lineage>
        <taxon>Bacteria</taxon>
        <taxon>Bacillati</taxon>
        <taxon>Cyanobacteriota</taxon>
        <taxon>Cyanophyceae</taxon>
        <taxon>Gomontiellales</taxon>
        <taxon>Cyanothecaceae</taxon>
        <taxon>Cyanothece</taxon>
    </lineage>
</organism>
<sequence length="622" mass="70748">MPKLEQRFDYVKIGLASPDRIRLWGERTLPNGQVVGEVTKPETINYRTLKPEMDGLFCERIFGPAKDWECHCGKYKRVRHRGIVCERCGVEVTESRVRRHRMGYIKLAAPVTHVWYLKGIPSYMATLLDMPLRDVEQIVYFNAYVVLNPGNHESLTYKQLLSEDQWIEIEDQIYSEDSQLVDIEVGIGAEAVQRLLQDLELETEAEALRSEIDVSKGQKRAKLIKRLRVIDNFIATGSRPDWMVLTVIPVIPPDLRPMVQLDGGRFATSDLNDLYRRVINRNNRLARLQEILAPEIIVRNEKRMLQEAVDALIDNGRRGRTVVGANNRPLKSLSDIIEGKQGRFRQNLLGKRVDYSGRSVIVVGPKLKMHQCGLPREMAIELFQPFVIHRLIRQGLVNNIKAAKRLIQRNDPIIWEVLEEVIDGHPVLLNRAPTLHRLGIQAFEPILVDGRAIQLHPLVCPAFNADFDGDQMAVHVPLSIESQAEARLLMLASNNILSPATGKPIVTPSQDMVLGCYYLTAENPKSQQGEGTYFASMNDVVMAYEQGQVELHAFIWVRYDGEVEDDDKGEPEIQTSGDGLVTHLYPSKRLRFDQDGKLISQYIRTTPGRIIYNKTIQESLAI</sequence>
<comment type="function">
    <text evidence="1">DNA-dependent RNA polymerase catalyzes the transcription of DNA into RNA using the four ribonucleoside triphosphates as substrates.</text>
</comment>
<comment type="catalytic activity">
    <reaction evidence="1">
        <text>RNA(n) + a ribonucleoside 5'-triphosphate = RNA(n+1) + diphosphate</text>
        <dbReference type="Rhea" id="RHEA:21248"/>
        <dbReference type="Rhea" id="RHEA-COMP:14527"/>
        <dbReference type="Rhea" id="RHEA-COMP:17342"/>
        <dbReference type="ChEBI" id="CHEBI:33019"/>
        <dbReference type="ChEBI" id="CHEBI:61557"/>
        <dbReference type="ChEBI" id="CHEBI:140395"/>
        <dbReference type="EC" id="2.7.7.6"/>
    </reaction>
</comment>
<comment type="cofactor">
    <cofactor evidence="1">
        <name>Mg(2+)</name>
        <dbReference type="ChEBI" id="CHEBI:18420"/>
    </cofactor>
    <text evidence="1">Binds 1 Mg(2+) ion per subunit.</text>
</comment>
<comment type="cofactor">
    <cofactor evidence="1">
        <name>Zn(2+)</name>
        <dbReference type="ChEBI" id="CHEBI:29105"/>
    </cofactor>
    <text evidence="1">Binds 1 Zn(2+) ion per subunit.</text>
</comment>
<comment type="subunit">
    <text evidence="1">In cyanobacteria the RNAP catalytic core is composed of 2 alpha, 1 beta, 1 beta', 1 gamma and 1 omega subunit. When a sigma factor is associated with the core the holoenzyme is formed, which can initiate transcription.</text>
</comment>
<comment type="similarity">
    <text evidence="1">Belongs to the RNA polymerase beta' chain family. RpoC1 subfamily.</text>
</comment>
<feature type="chain" id="PRO_1000165859" description="DNA-directed RNA polymerase subunit gamma">
    <location>
        <begin position="1"/>
        <end position="622"/>
    </location>
</feature>
<feature type="binding site" evidence="1">
    <location>
        <position position="70"/>
    </location>
    <ligand>
        <name>Zn(2+)</name>
        <dbReference type="ChEBI" id="CHEBI:29105"/>
    </ligand>
</feature>
<feature type="binding site" evidence="1">
    <location>
        <position position="72"/>
    </location>
    <ligand>
        <name>Zn(2+)</name>
        <dbReference type="ChEBI" id="CHEBI:29105"/>
    </ligand>
</feature>
<feature type="binding site" evidence="1">
    <location>
        <position position="85"/>
    </location>
    <ligand>
        <name>Zn(2+)</name>
        <dbReference type="ChEBI" id="CHEBI:29105"/>
    </ligand>
</feature>
<feature type="binding site" evidence="1">
    <location>
        <position position="88"/>
    </location>
    <ligand>
        <name>Zn(2+)</name>
        <dbReference type="ChEBI" id="CHEBI:29105"/>
    </ligand>
</feature>
<feature type="binding site" evidence="1">
    <location>
        <position position="466"/>
    </location>
    <ligand>
        <name>Mg(2+)</name>
        <dbReference type="ChEBI" id="CHEBI:18420"/>
    </ligand>
</feature>
<feature type="binding site" evidence="1">
    <location>
        <position position="468"/>
    </location>
    <ligand>
        <name>Mg(2+)</name>
        <dbReference type="ChEBI" id="CHEBI:18420"/>
    </ligand>
</feature>
<feature type="binding site" evidence="1">
    <location>
        <position position="470"/>
    </location>
    <ligand>
        <name>Mg(2+)</name>
        <dbReference type="ChEBI" id="CHEBI:18420"/>
    </ligand>
</feature>
<name>RPOC1_CYAP4</name>
<keyword id="KW-0240">DNA-directed RNA polymerase</keyword>
<keyword id="KW-0460">Magnesium</keyword>
<keyword id="KW-0479">Metal-binding</keyword>
<keyword id="KW-0548">Nucleotidyltransferase</keyword>
<keyword id="KW-0804">Transcription</keyword>
<keyword id="KW-0808">Transferase</keyword>
<keyword id="KW-0862">Zinc</keyword>
<evidence type="ECO:0000255" key="1">
    <source>
        <dbReference type="HAMAP-Rule" id="MF_01323"/>
    </source>
</evidence>
<reference key="1">
    <citation type="journal article" date="2011" name="MBio">
        <title>Novel metabolic attributes of the genus Cyanothece, comprising a group of unicellular nitrogen-fixing Cyanobacteria.</title>
        <authorList>
            <person name="Bandyopadhyay A."/>
            <person name="Elvitigala T."/>
            <person name="Welsh E."/>
            <person name="Stockel J."/>
            <person name="Liberton M."/>
            <person name="Min H."/>
            <person name="Sherman L.A."/>
            <person name="Pakrasi H.B."/>
        </authorList>
    </citation>
    <scope>NUCLEOTIDE SEQUENCE [LARGE SCALE GENOMIC DNA]</scope>
    <source>
        <strain>PCC 7425 / ATCC 29141</strain>
    </source>
</reference>
<gene>
    <name evidence="1" type="primary">rpoC1</name>
    <name type="ordered locus">Cyan7425_0487</name>
</gene>